<gene>
    <name evidence="1" type="primary">gcvT</name>
    <name type="ordered locus">YPTB3182</name>
</gene>
<reference key="1">
    <citation type="journal article" date="2004" name="Proc. Natl. Acad. Sci. U.S.A.">
        <title>Insights into the evolution of Yersinia pestis through whole-genome comparison with Yersinia pseudotuberculosis.</title>
        <authorList>
            <person name="Chain P.S.G."/>
            <person name="Carniel E."/>
            <person name="Larimer F.W."/>
            <person name="Lamerdin J."/>
            <person name="Stoutland P.O."/>
            <person name="Regala W.M."/>
            <person name="Georgescu A.M."/>
            <person name="Vergez L.M."/>
            <person name="Land M.L."/>
            <person name="Motin V.L."/>
            <person name="Brubaker R.R."/>
            <person name="Fowler J."/>
            <person name="Hinnebusch J."/>
            <person name="Marceau M."/>
            <person name="Medigue C."/>
            <person name="Simonet M."/>
            <person name="Chenal-Francisque V."/>
            <person name="Souza B."/>
            <person name="Dacheux D."/>
            <person name="Elliott J.M."/>
            <person name="Derbise A."/>
            <person name="Hauser L.J."/>
            <person name="Garcia E."/>
        </authorList>
    </citation>
    <scope>NUCLEOTIDE SEQUENCE [LARGE SCALE GENOMIC DNA]</scope>
    <source>
        <strain>IP32953</strain>
    </source>
</reference>
<accession>Q666R5</accession>
<protein>
    <recommendedName>
        <fullName evidence="1">Aminomethyltransferase</fullName>
        <ecNumber evidence="1">2.1.2.10</ecNumber>
    </recommendedName>
    <alternativeName>
        <fullName evidence="1">Glycine cleavage system T protein</fullName>
    </alternativeName>
</protein>
<sequence>MAKQTPLYDQHVACGARMVDFHGWMMPLHYGSQIDEHHLVRQDAGMFDVSHMTIVDLHGNRTREFLRYLLANDVAKLTQPGKALYTGMLNESGGVIDDLIVYFLSEDYFRLVVNSATRDKDLAWISQHAEPYQVEVTVRDDLALIAVQGPQAQQKVATLLTTEQQQAIAGMKPFFGIQTGDLFIATTGYTGEAGYEIALPKQQVVAFWQQLLAAGVKPAGLGARDTLRLEAGMNLYGQEMDEKTSPLAANMGWTVAWQPEDRQFIGRAALERQRMKGTEQLVGLIMTEKGVLRNELPVYFFDAAGNQHVGVITSGSFSPTLGFSIALARVPAGIGEHAVVQIRNREMPVRVTKPGFVRAGKAIVL</sequence>
<feature type="chain" id="PRO_0000122619" description="Aminomethyltransferase">
    <location>
        <begin position="1"/>
        <end position="365"/>
    </location>
</feature>
<dbReference type="EC" id="2.1.2.10" evidence="1"/>
<dbReference type="EMBL" id="BX936398">
    <property type="protein sequence ID" value="CAH22420.1"/>
    <property type="molecule type" value="Genomic_DNA"/>
</dbReference>
<dbReference type="RefSeq" id="WP_011192962.1">
    <property type="nucleotide sequence ID" value="NC_006155.1"/>
</dbReference>
<dbReference type="SMR" id="Q666R5"/>
<dbReference type="KEGG" id="ypo:BZ17_3429"/>
<dbReference type="KEGG" id="yps:YPTB3182"/>
<dbReference type="PATRIC" id="fig|273123.14.peg.3598"/>
<dbReference type="Proteomes" id="UP000001011">
    <property type="component" value="Chromosome"/>
</dbReference>
<dbReference type="GO" id="GO:0005829">
    <property type="term" value="C:cytosol"/>
    <property type="evidence" value="ECO:0007669"/>
    <property type="project" value="TreeGrafter"/>
</dbReference>
<dbReference type="GO" id="GO:0005960">
    <property type="term" value="C:glycine cleavage complex"/>
    <property type="evidence" value="ECO:0007669"/>
    <property type="project" value="InterPro"/>
</dbReference>
<dbReference type="GO" id="GO:0004047">
    <property type="term" value="F:aminomethyltransferase activity"/>
    <property type="evidence" value="ECO:0007669"/>
    <property type="project" value="UniProtKB-UniRule"/>
</dbReference>
<dbReference type="GO" id="GO:0008483">
    <property type="term" value="F:transaminase activity"/>
    <property type="evidence" value="ECO:0007669"/>
    <property type="project" value="UniProtKB-KW"/>
</dbReference>
<dbReference type="GO" id="GO:0019464">
    <property type="term" value="P:glycine decarboxylation via glycine cleavage system"/>
    <property type="evidence" value="ECO:0007669"/>
    <property type="project" value="UniProtKB-UniRule"/>
</dbReference>
<dbReference type="FunFam" id="2.40.30.110:FF:000001">
    <property type="entry name" value="Aminomethyltransferase"/>
    <property type="match status" value="1"/>
</dbReference>
<dbReference type="FunFam" id="3.30.70.1400:FF:000001">
    <property type="entry name" value="Aminomethyltransferase"/>
    <property type="match status" value="1"/>
</dbReference>
<dbReference type="FunFam" id="4.10.1250.10:FF:000001">
    <property type="entry name" value="Aminomethyltransferase"/>
    <property type="match status" value="1"/>
</dbReference>
<dbReference type="Gene3D" id="2.40.30.110">
    <property type="entry name" value="Aminomethyltransferase beta-barrel domains"/>
    <property type="match status" value="1"/>
</dbReference>
<dbReference type="Gene3D" id="3.30.70.1400">
    <property type="entry name" value="Aminomethyltransferase beta-barrel domains"/>
    <property type="match status" value="1"/>
</dbReference>
<dbReference type="Gene3D" id="4.10.1250.10">
    <property type="entry name" value="Aminomethyltransferase fragment"/>
    <property type="match status" value="1"/>
</dbReference>
<dbReference type="Gene3D" id="3.30.1360.120">
    <property type="entry name" value="Probable tRNA modification gtpase trme, domain 1"/>
    <property type="match status" value="1"/>
</dbReference>
<dbReference type="HAMAP" id="MF_00259">
    <property type="entry name" value="GcvT"/>
    <property type="match status" value="1"/>
</dbReference>
<dbReference type="InterPro" id="IPR006223">
    <property type="entry name" value="GCS_T"/>
</dbReference>
<dbReference type="InterPro" id="IPR022903">
    <property type="entry name" value="GCS_T_bac"/>
</dbReference>
<dbReference type="InterPro" id="IPR013977">
    <property type="entry name" value="GCST_C"/>
</dbReference>
<dbReference type="InterPro" id="IPR006222">
    <property type="entry name" value="GCV_T_N"/>
</dbReference>
<dbReference type="InterPro" id="IPR028896">
    <property type="entry name" value="GcvT/YgfZ/DmdA"/>
</dbReference>
<dbReference type="InterPro" id="IPR029043">
    <property type="entry name" value="GcvT/YgfZ_C"/>
</dbReference>
<dbReference type="InterPro" id="IPR027266">
    <property type="entry name" value="TrmE/GcvT_dom1"/>
</dbReference>
<dbReference type="NCBIfam" id="TIGR00528">
    <property type="entry name" value="gcvT"/>
    <property type="match status" value="1"/>
</dbReference>
<dbReference type="NCBIfam" id="NF001567">
    <property type="entry name" value="PRK00389.1"/>
    <property type="match status" value="1"/>
</dbReference>
<dbReference type="PANTHER" id="PTHR43757">
    <property type="entry name" value="AMINOMETHYLTRANSFERASE"/>
    <property type="match status" value="1"/>
</dbReference>
<dbReference type="PANTHER" id="PTHR43757:SF2">
    <property type="entry name" value="AMINOMETHYLTRANSFERASE, MITOCHONDRIAL"/>
    <property type="match status" value="1"/>
</dbReference>
<dbReference type="Pfam" id="PF01571">
    <property type="entry name" value="GCV_T"/>
    <property type="match status" value="1"/>
</dbReference>
<dbReference type="Pfam" id="PF08669">
    <property type="entry name" value="GCV_T_C"/>
    <property type="match status" value="1"/>
</dbReference>
<dbReference type="PIRSF" id="PIRSF006487">
    <property type="entry name" value="GcvT"/>
    <property type="match status" value="1"/>
</dbReference>
<dbReference type="SUPFAM" id="SSF101790">
    <property type="entry name" value="Aminomethyltransferase beta-barrel domain"/>
    <property type="match status" value="1"/>
</dbReference>
<dbReference type="SUPFAM" id="SSF103025">
    <property type="entry name" value="Folate-binding domain"/>
    <property type="match status" value="1"/>
</dbReference>
<proteinExistence type="inferred from homology"/>
<name>GCST_YERPS</name>
<comment type="function">
    <text evidence="1">The glycine cleavage system catalyzes the degradation of glycine.</text>
</comment>
<comment type="catalytic activity">
    <reaction evidence="1">
        <text>N(6)-[(R)-S(8)-aminomethyldihydrolipoyl]-L-lysyl-[protein] + (6S)-5,6,7,8-tetrahydrofolate = N(6)-[(R)-dihydrolipoyl]-L-lysyl-[protein] + (6R)-5,10-methylene-5,6,7,8-tetrahydrofolate + NH4(+)</text>
        <dbReference type="Rhea" id="RHEA:16945"/>
        <dbReference type="Rhea" id="RHEA-COMP:10475"/>
        <dbReference type="Rhea" id="RHEA-COMP:10492"/>
        <dbReference type="ChEBI" id="CHEBI:15636"/>
        <dbReference type="ChEBI" id="CHEBI:28938"/>
        <dbReference type="ChEBI" id="CHEBI:57453"/>
        <dbReference type="ChEBI" id="CHEBI:83100"/>
        <dbReference type="ChEBI" id="CHEBI:83143"/>
        <dbReference type="EC" id="2.1.2.10"/>
    </reaction>
</comment>
<comment type="subunit">
    <text evidence="1">The glycine cleavage system is composed of four proteins: P, T, L and H.</text>
</comment>
<comment type="similarity">
    <text evidence="1">Belongs to the GcvT family.</text>
</comment>
<keyword id="KW-0032">Aminotransferase</keyword>
<keyword id="KW-0808">Transferase</keyword>
<evidence type="ECO:0000255" key="1">
    <source>
        <dbReference type="HAMAP-Rule" id="MF_00259"/>
    </source>
</evidence>
<organism>
    <name type="scientific">Yersinia pseudotuberculosis serotype I (strain IP32953)</name>
    <dbReference type="NCBI Taxonomy" id="273123"/>
    <lineage>
        <taxon>Bacteria</taxon>
        <taxon>Pseudomonadati</taxon>
        <taxon>Pseudomonadota</taxon>
        <taxon>Gammaproteobacteria</taxon>
        <taxon>Enterobacterales</taxon>
        <taxon>Yersiniaceae</taxon>
        <taxon>Yersinia</taxon>
    </lineage>
</organism>